<dbReference type="EC" id="1.2.1.47" evidence="1"/>
<dbReference type="EC" id="1.2.1.3" evidence="1"/>
<dbReference type="EC" id="1.2.1.46" evidence="1"/>
<dbReference type="EC" id="1.2.1.19" evidence="1"/>
<dbReference type="EMBL" id="CR859849">
    <property type="protein sequence ID" value="CAH92006.1"/>
    <property type="status" value="ALT_INIT"/>
    <property type="molecule type" value="mRNA"/>
</dbReference>
<dbReference type="RefSeq" id="NP_001126165.1">
    <property type="nucleotide sequence ID" value="NM_001132693.1"/>
</dbReference>
<dbReference type="SMR" id="Q5R8A4"/>
<dbReference type="FunCoup" id="Q5R8A4">
    <property type="interactions" value="925"/>
</dbReference>
<dbReference type="STRING" id="9601.ENSPPYP00000000664"/>
<dbReference type="GeneID" id="100173126"/>
<dbReference type="KEGG" id="pon:100173126"/>
<dbReference type="CTD" id="223"/>
<dbReference type="eggNOG" id="KOG2450">
    <property type="taxonomic scope" value="Eukaryota"/>
</dbReference>
<dbReference type="InParanoid" id="Q5R8A4"/>
<dbReference type="OrthoDB" id="310895at2759"/>
<dbReference type="UniPathway" id="UPA00118"/>
<dbReference type="Proteomes" id="UP000001595">
    <property type="component" value="Unplaced"/>
</dbReference>
<dbReference type="GO" id="GO:0005737">
    <property type="term" value="C:cytoplasm"/>
    <property type="evidence" value="ECO:0000250"/>
    <property type="project" value="UniProtKB"/>
</dbReference>
<dbReference type="GO" id="GO:0005829">
    <property type="term" value="C:cytosol"/>
    <property type="evidence" value="ECO:0007669"/>
    <property type="project" value="UniProtKB-SubCell"/>
</dbReference>
<dbReference type="GO" id="GO:0047105">
    <property type="term" value="F:4-trimethylammoniobutyraldehyde dehydrogenase activity"/>
    <property type="evidence" value="ECO:0000250"/>
    <property type="project" value="UniProtKB"/>
</dbReference>
<dbReference type="GO" id="GO:0140087">
    <property type="term" value="F:acetaldehyde dehydrogenase (NAD+) activity"/>
    <property type="evidence" value="ECO:0007669"/>
    <property type="project" value="RHEA"/>
</dbReference>
<dbReference type="GO" id="GO:0004029">
    <property type="term" value="F:aldehyde dehydrogenase (NAD+) activity"/>
    <property type="evidence" value="ECO:0000250"/>
    <property type="project" value="UniProtKB"/>
</dbReference>
<dbReference type="GO" id="GO:0019145">
    <property type="term" value="F:aminobutyraldehyde dehydrogenase (NAD+) activity"/>
    <property type="evidence" value="ECO:0000250"/>
    <property type="project" value="UniProtKB"/>
</dbReference>
<dbReference type="GO" id="GO:0018467">
    <property type="term" value="F:formaldehyde dehydrogenase (NAD+) activity"/>
    <property type="evidence" value="ECO:0000250"/>
    <property type="project" value="UniProtKB"/>
</dbReference>
<dbReference type="GO" id="GO:0006081">
    <property type="term" value="P:aldehyde metabolic process"/>
    <property type="evidence" value="ECO:0000250"/>
    <property type="project" value="UniProtKB"/>
</dbReference>
<dbReference type="GO" id="GO:0045329">
    <property type="term" value="P:carnitine biosynthetic process"/>
    <property type="evidence" value="ECO:0007669"/>
    <property type="project" value="UniProtKB-UniPathway"/>
</dbReference>
<dbReference type="GO" id="GO:0051289">
    <property type="term" value="P:protein homotetramerization"/>
    <property type="evidence" value="ECO:0000250"/>
    <property type="project" value="UniProtKB"/>
</dbReference>
<dbReference type="CDD" id="cd07090">
    <property type="entry name" value="ALDH_F9_TMBADH"/>
    <property type="match status" value="1"/>
</dbReference>
<dbReference type="FunFam" id="3.40.309.10:FF:000019">
    <property type="entry name" value="4-trimethylaminobutyraldehyde dehydrogenase isoform X1"/>
    <property type="match status" value="1"/>
</dbReference>
<dbReference type="FunFam" id="3.40.605.10:FF:000016">
    <property type="entry name" value="4-trimethylaminobutyraldehyde dehydrogenase isoform X1"/>
    <property type="match status" value="1"/>
</dbReference>
<dbReference type="Gene3D" id="3.40.605.10">
    <property type="entry name" value="Aldehyde Dehydrogenase, Chain A, domain 1"/>
    <property type="match status" value="1"/>
</dbReference>
<dbReference type="Gene3D" id="3.40.309.10">
    <property type="entry name" value="Aldehyde Dehydrogenase, Chain A, domain 2"/>
    <property type="match status" value="1"/>
</dbReference>
<dbReference type="InterPro" id="IPR016161">
    <property type="entry name" value="Ald_DH/histidinol_DH"/>
</dbReference>
<dbReference type="InterPro" id="IPR016163">
    <property type="entry name" value="Ald_DH_C"/>
</dbReference>
<dbReference type="InterPro" id="IPR016160">
    <property type="entry name" value="Ald_DH_CS_CYS"/>
</dbReference>
<dbReference type="InterPro" id="IPR029510">
    <property type="entry name" value="Ald_DH_CS_GLU"/>
</dbReference>
<dbReference type="InterPro" id="IPR016162">
    <property type="entry name" value="Ald_DH_N"/>
</dbReference>
<dbReference type="InterPro" id="IPR015590">
    <property type="entry name" value="Aldehyde_DH_dom"/>
</dbReference>
<dbReference type="NCBIfam" id="NF009725">
    <property type="entry name" value="PRK13252.1"/>
    <property type="match status" value="1"/>
</dbReference>
<dbReference type="PANTHER" id="PTHR11699">
    <property type="entry name" value="ALDEHYDE DEHYDROGENASE-RELATED"/>
    <property type="match status" value="1"/>
</dbReference>
<dbReference type="Pfam" id="PF00171">
    <property type="entry name" value="Aldedh"/>
    <property type="match status" value="1"/>
</dbReference>
<dbReference type="SUPFAM" id="SSF53720">
    <property type="entry name" value="ALDH-like"/>
    <property type="match status" value="1"/>
</dbReference>
<dbReference type="PROSITE" id="PS00070">
    <property type="entry name" value="ALDEHYDE_DEHYDR_CYS"/>
    <property type="match status" value="1"/>
</dbReference>
<dbReference type="PROSITE" id="PS00687">
    <property type="entry name" value="ALDEHYDE_DEHYDR_GLU"/>
    <property type="match status" value="1"/>
</dbReference>
<reference key="1">
    <citation type="submission" date="2004-11" db="EMBL/GenBank/DDBJ databases">
        <authorList>
            <consortium name="The German cDNA consortium"/>
        </authorList>
    </citation>
    <scope>NUCLEOTIDE SEQUENCE [LARGE SCALE MRNA]</scope>
    <source>
        <tissue>Kidney</tissue>
    </source>
</reference>
<proteinExistence type="evidence at transcript level"/>
<sequence length="494" mass="53787">MSTGTFVVSQPLNYRGGARVEPADASGTEKAFEPATGRVIATFTCSGEKEVNLAVQNAKAAFKIWSQKSGMERCRILLEAARIIREREGEIATMECINNGKSIFEARLDINISWQCLEYYAGLAASMAGEHIQLPGGSFGYTRREPLGVCVGIGAWNYPFQITSWKSAPALACGNAMVFKPSPFTPVSALLLAEIYTEAGVPPGLFNVVQGGAATGQFLCQHPDVAKVSFTGSVPTGMKIMEMSAKGIKPVTLELGGKSPLIIFSDCDMNNAVKGALMANFLTQGQVCCNGTRVFVQKEILDKFTEEVVKQTQRIKIGDPLLEDTRMGPLINRPHLERVLGFVKVAKEQGAKVLCGGDIYVPEDPKLKDGYYMRPCVLTNCRDDMTCVKEEIFGPVMSILSFDTEAEVLERANDTTFGLAAGVFTRDIQRAHRVVAELQAGTCFINNYNVSPVELPFGGYKKSGFGRENGRVTIEYYSQLKTVCVEMGDVESAF</sequence>
<protein>
    <recommendedName>
        <fullName>4-trimethylaminobutyraldehyde dehydrogenase</fullName>
        <shortName>TMABA-DH</shortName>
        <shortName>TMABADH</shortName>
        <ecNumber evidence="1">1.2.1.47</ecNumber>
    </recommendedName>
    <alternativeName>
        <fullName>Aldehyde dehydrogenase family 9 member A1</fullName>
        <ecNumber evidence="1">1.2.1.3</ecNumber>
    </alternativeName>
    <alternativeName>
        <fullName>Formaldehyde dehydrogenase</fullName>
        <ecNumber evidence="1">1.2.1.46</ecNumber>
    </alternativeName>
    <alternativeName>
        <fullName>Gamma-aminobutyraldehyde dehydrogenase</fullName>
        <ecNumber evidence="1">1.2.1.19</ecNumber>
    </alternativeName>
</protein>
<keyword id="KW-0007">Acetylation</keyword>
<keyword id="KW-0963">Cytoplasm</keyword>
<keyword id="KW-0520">NAD</keyword>
<keyword id="KW-0560">Oxidoreductase</keyword>
<keyword id="KW-1185">Reference proteome</keyword>
<feature type="initiator methionine" description="Removed" evidence="1">
    <location>
        <position position="1"/>
    </location>
</feature>
<feature type="chain" id="PRO_0000056488" description="4-trimethylaminobutyraldehyde dehydrogenase">
    <location>
        <begin position="2"/>
        <end position="494"/>
    </location>
</feature>
<feature type="active site" description="Proton acceptor" evidence="5">
    <location>
        <position position="254"/>
    </location>
</feature>
<feature type="active site" description="Nucleophile" evidence="6">
    <location>
        <position position="288"/>
    </location>
</feature>
<feature type="binding site" evidence="2">
    <location>
        <position position="180"/>
    </location>
    <ligand>
        <name>NAD(+)</name>
        <dbReference type="ChEBI" id="CHEBI:57540"/>
    </ligand>
</feature>
<feature type="binding site" evidence="2">
    <location>
        <begin position="232"/>
        <end position="236"/>
    </location>
    <ligand>
        <name>NAD(+)</name>
        <dbReference type="ChEBI" id="CHEBI:57540"/>
    </ligand>
</feature>
<feature type="binding site" evidence="2">
    <location>
        <position position="391"/>
    </location>
    <ligand>
        <name>NAD(+)</name>
        <dbReference type="ChEBI" id="CHEBI:57540"/>
    </ligand>
</feature>
<feature type="modified residue" description="N-acetylserine" evidence="1">
    <location>
        <position position="2"/>
    </location>
</feature>
<feature type="modified residue" description="N6-acetyllysine; alternate" evidence="3">
    <location>
        <position position="30"/>
    </location>
</feature>
<feature type="modified residue" description="N6-succinyllysine; alternate" evidence="3">
    <location>
        <position position="30"/>
    </location>
</feature>
<feature type="modified residue" description="N6-succinyllysine" evidence="3">
    <location>
        <position position="59"/>
    </location>
</feature>
<feature type="modified residue" description="N6-acetyllysine" evidence="1">
    <location>
        <position position="298"/>
    </location>
</feature>
<feature type="modified residue" description="N6-acetyllysine; alternate" evidence="3">
    <location>
        <position position="303"/>
    </location>
</feature>
<feature type="modified residue" description="N6-succinyllysine; alternate" evidence="3">
    <location>
        <position position="303"/>
    </location>
</feature>
<feature type="modified residue" description="N6-acetyllysine" evidence="3">
    <location>
        <position position="344"/>
    </location>
</feature>
<evidence type="ECO:0000250" key="1">
    <source>
        <dbReference type="UniProtKB" id="P49189"/>
    </source>
</evidence>
<evidence type="ECO:0000250" key="2">
    <source>
        <dbReference type="UniProtKB" id="P56533"/>
    </source>
</evidence>
<evidence type="ECO:0000250" key="3">
    <source>
        <dbReference type="UniProtKB" id="Q9JLJ2"/>
    </source>
</evidence>
<evidence type="ECO:0000250" key="4">
    <source>
        <dbReference type="UniProtKB" id="Q9JLJ3"/>
    </source>
</evidence>
<evidence type="ECO:0000255" key="5">
    <source>
        <dbReference type="PROSITE-ProRule" id="PRU10007"/>
    </source>
</evidence>
<evidence type="ECO:0000255" key="6">
    <source>
        <dbReference type="PROSITE-ProRule" id="PRU10008"/>
    </source>
</evidence>
<evidence type="ECO:0000305" key="7"/>
<comment type="function">
    <text evidence="1">Converts gamma-trimethylaminobutyraldehyde into gamma-butyrobetaine with high efficiency (in vitro). Can catalyze the irreversible oxidation of a broad range of aldehydes to the corresponding acids in an NAD-dependent reaction, but with low efficiency. Catalyzes the oxidation of aldehydes arising from biogenic amines and polyamines.</text>
</comment>
<comment type="catalytic activity">
    <reaction evidence="1">
        <text>4-(trimethylamino)butanal + NAD(+) + H2O = 4-(trimethylamino)butanoate + NADH + 2 H(+)</text>
        <dbReference type="Rhea" id="RHEA:17985"/>
        <dbReference type="ChEBI" id="CHEBI:15377"/>
        <dbReference type="ChEBI" id="CHEBI:15378"/>
        <dbReference type="ChEBI" id="CHEBI:16244"/>
        <dbReference type="ChEBI" id="CHEBI:18020"/>
        <dbReference type="ChEBI" id="CHEBI:57540"/>
        <dbReference type="ChEBI" id="CHEBI:57945"/>
        <dbReference type="EC" id="1.2.1.47"/>
    </reaction>
</comment>
<comment type="catalytic activity">
    <reaction evidence="1">
        <text>an aldehyde + NAD(+) + H2O = a carboxylate + NADH + 2 H(+)</text>
        <dbReference type="Rhea" id="RHEA:16185"/>
        <dbReference type="ChEBI" id="CHEBI:15377"/>
        <dbReference type="ChEBI" id="CHEBI:15378"/>
        <dbReference type="ChEBI" id="CHEBI:17478"/>
        <dbReference type="ChEBI" id="CHEBI:29067"/>
        <dbReference type="ChEBI" id="CHEBI:57540"/>
        <dbReference type="ChEBI" id="CHEBI:57945"/>
        <dbReference type="EC" id="1.2.1.3"/>
    </reaction>
</comment>
<comment type="catalytic activity">
    <reaction evidence="1">
        <text>4-aminobutanal + NAD(+) + H2O = 4-aminobutanoate + NADH + 2 H(+)</text>
        <dbReference type="Rhea" id="RHEA:19105"/>
        <dbReference type="ChEBI" id="CHEBI:15377"/>
        <dbReference type="ChEBI" id="CHEBI:15378"/>
        <dbReference type="ChEBI" id="CHEBI:57540"/>
        <dbReference type="ChEBI" id="CHEBI:57945"/>
        <dbReference type="ChEBI" id="CHEBI:58264"/>
        <dbReference type="ChEBI" id="CHEBI:59888"/>
        <dbReference type="EC" id="1.2.1.19"/>
    </reaction>
</comment>
<comment type="catalytic activity">
    <reaction evidence="1">
        <text>formaldehyde + NAD(+) + H2O = formate + NADH + 2 H(+)</text>
        <dbReference type="Rhea" id="RHEA:16425"/>
        <dbReference type="ChEBI" id="CHEBI:15377"/>
        <dbReference type="ChEBI" id="CHEBI:15378"/>
        <dbReference type="ChEBI" id="CHEBI:15740"/>
        <dbReference type="ChEBI" id="CHEBI:16842"/>
        <dbReference type="ChEBI" id="CHEBI:57540"/>
        <dbReference type="ChEBI" id="CHEBI:57945"/>
        <dbReference type="EC" id="1.2.1.46"/>
    </reaction>
</comment>
<comment type="catalytic activity">
    <reaction evidence="1">
        <text>acetaldehyde + NAD(+) + H2O = acetate + NADH + 2 H(+)</text>
        <dbReference type="Rhea" id="RHEA:25294"/>
        <dbReference type="ChEBI" id="CHEBI:15343"/>
        <dbReference type="ChEBI" id="CHEBI:15377"/>
        <dbReference type="ChEBI" id="CHEBI:15378"/>
        <dbReference type="ChEBI" id="CHEBI:30089"/>
        <dbReference type="ChEBI" id="CHEBI:57540"/>
        <dbReference type="ChEBI" id="CHEBI:57945"/>
        <dbReference type="EC" id="1.2.1.3"/>
    </reaction>
</comment>
<comment type="catalytic activity">
    <reaction evidence="1">
        <text>imidazole-4-acetaldehyde + NAD(+) + H2O = imidazole-4-acetate + NADH + 2 H(+)</text>
        <dbReference type="Rhea" id="RHEA:31059"/>
        <dbReference type="ChEBI" id="CHEBI:15377"/>
        <dbReference type="ChEBI" id="CHEBI:15378"/>
        <dbReference type="ChEBI" id="CHEBI:27398"/>
        <dbReference type="ChEBI" id="CHEBI:57540"/>
        <dbReference type="ChEBI" id="CHEBI:57945"/>
        <dbReference type="ChEBI" id="CHEBI:57969"/>
    </reaction>
</comment>
<comment type="catalytic activity">
    <reaction evidence="1">
        <text>acrolein + NAD(+) + H2O = acrylate + NADH + 2 H(+)</text>
        <dbReference type="Rhea" id="RHEA:69084"/>
        <dbReference type="ChEBI" id="CHEBI:15368"/>
        <dbReference type="ChEBI" id="CHEBI:15377"/>
        <dbReference type="ChEBI" id="CHEBI:15378"/>
        <dbReference type="ChEBI" id="CHEBI:37080"/>
        <dbReference type="ChEBI" id="CHEBI:57540"/>
        <dbReference type="ChEBI" id="CHEBI:57945"/>
    </reaction>
</comment>
<comment type="catalytic activity">
    <reaction evidence="1">
        <text>(5-hydroxyindol-3-yl)acetaldehyde + NAD(+) + H2O = (5-hydroxyindol-3-yl)acetate + NADH + 2 H(+)</text>
        <dbReference type="Rhea" id="RHEA:31215"/>
        <dbReference type="ChEBI" id="CHEBI:15377"/>
        <dbReference type="ChEBI" id="CHEBI:15378"/>
        <dbReference type="ChEBI" id="CHEBI:50157"/>
        <dbReference type="ChEBI" id="CHEBI:57540"/>
        <dbReference type="ChEBI" id="CHEBI:57945"/>
        <dbReference type="ChEBI" id="CHEBI:62622"/>
    </reaction>
</comment>
<comment type="catalytic activity">
    <reaction evidence="1">
        <text>3,4-dihydroxyphenylacetaldehyde + NAD(+) + H2O = 3,4-dihydroxyphenylacetate + NADH + 2 H(+)</text>
        <dbReference type="Rhea" id="RHEA:69080"/>
        <dbReference type="ChEBI" id="CHEBI:15377"/>
        <dbReference type="ChEBI" id="CHEBI:15378"/>
        <dbReference type="ChEBI" id="CHEBI:17612"/>
        <dbReference type="ChEBI" id="CHEBI:27978"/>
        <dbReference type="ChEBI" id="CHEBI:57540"/>
        <dbReference type="ChEBI" id="CHEBI:57945"/>
    </reaction>
</comment>
<comment type="catalytic activity">
    <reaction evidence="1">
        <text>spermine monoaldehyde + NAD(+) + H2O = N-(2-carboxyethyl)spermidine + NADH + 2 H(+)</text>
        <dbReference type="Rhea" id="RHEA:69168"/>
        <dbReference type="ChEBI" id="CHEBI:15377"/>
        <dbReference type="ChEBI" id="CHEBI:15378"/>
        <dbReference type="ChEBI" id="CHEBI:57540"/>
        <dbReference type="ChEBI" id="CHEBI:57945"/>
        <dbReference type="ChEBI" id="CHEBI:180903"/>
        <dbReference type="ChEBI" id="CHEBI:180913"/>
    </reaction>
</comment>
<comment type="catalytic activity">
    <reaction evidence="1">
        <text>propanal + NAD(+) + H2O = propanoate + NADH + 2 H(+)</text>
        <dbReference type="Rhea" id="RHEA:67256"/>
        <dbReference type="ChEBI" id="CHEBI:15377"/>
        <dbReference type="ChEBI" id="CHEBI:15378"/>
        <dbReference type="ChEBI" id="CHEBI:17153"/>
        <dbReference type="ChEBI" id="CHEBI:17272"/>
        <dbReference type="ChEBI" id="CHEBI:57540"/>
        <dbReference type="ChEBI" id="CHEBI:57945"/>
    </reaction>
</comment>
<comment type="catalytic activity">
    <reaction evidence="1">
        <text>butanal + NAD(+) + H2O = butanoate + NADH + 2 H(+)</text>
        <dbReference type="Rhea" id="RHEA:69088"/>
        <dbReference type="ChEBI" id="CHEBI:15377"/>
        <dbReference type="ChEBI" id="CHEBI:15378"/>
        <dbReference type="ChEBI" id="CHEBI:15743"/>
        <dbReference type="ChEBI" id="CHEBI:17968"/>
        <dbReference type="ChEBI" id="CHEBI:57540"/>
        <dbReference type="ChEBI" id="CHEBI:57945"/>
    </reaction>
</comment>
<comment type="catalytic activity">
    <reaction evidence="1">
        <text>pentanal + NAD(+) + H2O = pentanoate + NADH + 2 H(+)</text>
        <dbReference type="Rhea" id="RHEA:69092"/>
        <dbReference type="ChEBI" id="CHEBI:15377"/>
        <dbReference type="ChEBI" id="CHEBI:15378"/>
        <dbReference type="ChEBI" id="CHEBI:31011"/>
        <dbReference type="ChEBI" id="CHEBI:57540"/>
        <dbReference type="ChEBI" id="CHEBI:57945"/>
        <dbReference type="ChEBI" id="CHEBI:84069"/>
    </reaction>
</comment>
<comment type="catalytic activity">
    <reaction evidence="1">
        <text>hexanal + NAD(+) + H2O = hexanoate + NADH + 2 H(+)</text>
        <dbReference type="Rhea" id="RHEA:67276"/>
        <dbReference type="ChEBI" id="CHEBI:15377"/>
        <dbReference type="ChEBI" id="CHEBI:15378"/>
        <dbReference type="ChEBI" id="CHEBI:17120"/>
        <dbReference type="ChEBI" id="CHEBI:57540"/>
        <dbReference type="ChEBI" id="CHEBI:57945"/>
        <dbReference type="ChEBI" id="CHEBI:88528"/>
    </reaction>
</comment>
<comment type="pathway">
    <text evidence="1">Amine and polyamine biosynthesis; carnitine biosynthesis.</text>
</comment>
<comment type="subunit">
    <text evidence="1">Homotetramer.</text>
</comment>
<comment type="subcellular location">
    <subcellularLocation>
        <location evidence="4">Cytoplasm</location>
        <location evidence="4">Cytosol</location>
    </subcellularLocation>
    <subcellularLocation>
        <location evidence="1">Cytoplasm</location>
    </subcellularLocation>
</comment>
<comment type="similarity">
    <text evidence="7">Belongs to the aldehyde dehydrogenase family.</text>
</comment>
<comment type="sequence caution" evidence="7">
    <conflict type="erroneous initiation">
        <sequence resource="EMBL-CDS" id="CAH92006"/>
    </conflict>
</comment>
<gene>
    <name type="primary">ALDH9A1</name>
</gene>
<organism>
    <name type="scientific">Pongo abelii</name>
    <name type="common">Sumatran orangutan</name>
    <name type="synonym">Pongo pygmaeus abelii</name>
    <dbReference type="NCBI Taxonomy" id="9601"/>
    <lineage>
        <taxon>Eukaryota</taxon>
        <taxon>Metazoa</taxon>
        <taxon>Chordata</taxon>
        <taxon>Craniata</taxon>
        <taxon>Vertebrata</taxon>
        <taxon>Euteleostomi</taxon>
        <taxon>Mammalia</taxon>
        <taxon>Eutheria</taxon>
        <taxon>Euarchontoglires</taxon>
        <taxon>Primates</taxon>
        <taxon>Haplorrhini</taxon>
        <taxon>Catarrhini</taxon>
        <taxon>Hominidae</taxon>
        <taxon>Pongo</taxon>
    </lineage>
</organism>
<name>AL9A1_PONAB</name>
<accession>Q5R8A4</accession>